<name>ACYP_STAAC</name>
<sequence>MRHIHLQVFGRVQGVGFRYFTQRIAMNYNIVGTVQNVDDYVEIYAQGDDADIERFIQGVIEGASPASNVTSHQLEELELNQKLSDFRSI</sequence>
<proteinExistence type="inferred from homology"/>
<comment type="catalytic activity">
    <reaction>
        <text>an acyl phosphate + H2O = a carboxylate + phosphate + H(+)</text>
        <dbReference type="Rhea" id="RHEA:14965"/>
        <dbReference type="ChEBI" id="CHEBI:15377"/>
        <dbReference type="ChEBI" id="CHEBI:15378"/>
        <dbReference type="ChEBI" id="CHEBI:29067"/>
        <dbReference type="ChEBI" id="CHEBI:43474"/>
        <dbReference type="ChEBI" id="CHEBI:59918"/>
        <dbReference type="EC" id="3.6.1.7"/>
    </reaction>
</comment>
<comment type="similarity">
    <text evidence="2">Belongs to the acylphosphatase family.</text>
</comment>
<keyword id="KW-0378">Hydrolase</keyword>
<gene>
    <name type="primary">acyP</name>
    <name type="ordered locus">SACOL1439</name>
</gene>
<evidence type="ECO:0000255" key="1">
    <source>
        <dbReference type="PROSITE-ProRule" id="PRU00520"/>
    </source>
</evidence>
<evidence type="ECO:0000305" key="2"/>
<accession>Q5HG16</accession>
<reference key="1">
    <citation type="journal article" date="2005" name="J. Bacteriol.">
        <title>Insights on evolution of virulence and resistance from the complete genome analysis of an early methicillin-resistant Staphylococcus aureus strain and a biofilm-producing methicillin-resistant Staphylococcus epidermidis strain.</title>
        <authorList>
            <person name="Gill S.R."/>
            <person name="Fouts D.E."/>
            <person name="Archer G.L."/>
            <person name="Mongodin E.F."/>
            <person name="DeBoy R.T."/>
            <person name="Ravel J."/>
            <person name="Paulsen I.T."/>
            <person name="Kolonay J.F."/>
            <person name="Brinkac L.M."/>
            <person name="Beanan M.J."/>
            <person name="Dodson R.J."/>
            <person name="Daugherty S.C."/>
            <person name="Madupu R."/>
            <person name="Angiuoli S.V."/>
            <person name="Durkin A.S."/>
            <person name="Haft D.H."/>
            <person name="Vamathevan J.J."/>
            <person name="Khouri H."/>
            <person name="Utterback T.R."/>
            <person name="Lee C."/>
            <person name="Dimitrov G."/>
            <person name="Jiang L."/>
            <person name="Qin H."/>
            <person name="Weidman J."/>
            <person name="Tran K."/>
            <person name="Kang K.H."/>
            <person name="Hance I.R."/>
            <person name="Nelson K.E."/>
            <person name="Fraser C.M."/>
        </authorList>
    </citation>
    <scope>NUCLEOTIDE SEQUENCE [LARGE SCALE GENOMIC DNA]</scope>
    <source>
        <strain>COL</strain>
    </source>
</reference>
<feature type="chain" id="PRO_0000326809" description="Acylphosphatase">
    <location>
        <begin position="1"/>
        <end position="89"/>
    </location>
</feature>
<feature type="domain" description="Acylphosphatase-like" evidence="1">
    <location>
        <begin position="3"/>
        <end position="89"/>
    </location>
</feature>
<feature type="active site" evidence="1">
    <location>
        <position position="18"/>
    </location>
</feature>
<feature type="active site" evidence="1">
    <location>
        <position position="36"/>
    </location>
</feature>
<dbReference type="EC" id="3.6.1.7"/>
<dbReference type="EMBL" id="CP000046">
    <property type="protein sequence ID" value="AAW38184.1"/>
    <property type="molecule type" value="Genomic_DNA"/>
</dbReference>
<dbReference type="RefSeq" id="WP_001215907.1">
    <property type="nucleotide sequence ID" value="NZ_JBGOFO010000003.1"/>
</dbReference>
<dbReference type="SMR" id="Q5HG16"/>
<dbReference type="KEGG" id="sac:SACOL1439"/>
<dbReference type="HOGENOM" id="CLU_141932_2_1_9"/>
<dbReference type="Proteomes" id="UP000000530">
    <property type="component" value="Chromosome"/>
</dbReference>
<dbReference type="GO" id="GO:0003998">
    <property type="term" value="F:acylphosphatase activity"/>
    <property type="evidence" value="ECO:0007669"/>
    <property type="project" value="UniProtKB-EC"/>
</dbReference>
<dbReference type="GO" id="GO:0016743">
    <property type="term" value="F:carboxyl- or carbamoyltransferase activity"/>
    <property type="evidence" value="ECO:0007669"/>
    <property type="project" value="TreeGrafter"/>
</dbReference>
<dbReference type="GO" id="GO:0008270">
    <property type="term" value="F:zinc ion binding"/>
    <property type="evidence" value="ECO:0007669"/>
    <property type="project" value="TreeGrafter"/>
</dbReference>
<dbReference type="GO" id="GO:0051604">
    <property type="term" value="P:protein maturation"/>
    <property type="evidence" value="ECO:0007669"/>
    <property type="project" value="TreeGrafter"/>
</dbReference>
<dbReference type="Gene3D" id="3.30.70.100">
    <property type="match status" value="1"/>
</dbReference>
<dbReference type="InterPro" id="IPR001792">
    <property type="entry name" value="Acylphosphatase-like_dom"/>
</dbReference>
<dbReference type="InterPro" id="IPR036046">
    <property type="entry name" value="Acylphosphatase-like_dom_sf"/>
</dbReference>
<dbReference type="InterPro" id="IPR017968">
    <property type="entry name" value="Acylphosphatase_CS"/>
</dbReference>
<dbReference type="InterPro" id="IPR051060">
    <property type="entry name" value="Carbamoyltrans_HypF-like"/>
</dbReference>
<dbReference type="NCBIfam" id="NF011005">
    <property type="entry name" value="PRK14431.1"/>
    <property type="match status" value="1"/>
</dbReference>
<dbReference type="PANTHER" id="PTHR42959">
    <property type="entry name" value="CARBAMOYLTRANSFERASE"/>
    <property type="match status" value="1"/>
</dbReference>
<dbReference type="PANTHER" id="PTHR42959:SF1">
    <property type="entry name" value="CARBAMOYLTRANSFERASE HYPF"/>
    <property type="match status" value="1"/>
</dbReference>
<dbReference type="Pfam" id="PF00708">
    <property type="entry name" value="Acylphosphatase"/>
    <property type="match status" value="1"/>
</dbReference>
<dbReference type="SUPFAM" id="SSF54975">
    <property type="entry name" value="Acylphosphatase/BLUF domain-like"/>
    <property type="match status" value="1"/>
</dbReference>
<dbReference type="PROSITE" id="PS00150">
    <property type="entry name" value="ACYLPHOSPHATASE_1"/>
    <property type="match status" value="1"/>
</dbReference>
<dbReference type="PROSITE" id="PS51160">
    <property type="entry name" value="ACYLPHOSPHATASE_3"/>
    <property type="match status" value="1"/>
</dbReference>
<organism>
    <name type="scientific">Staphylococcus aureus (strain COL)</name>
    <dbReference type="NCBI Taxonomy" id="93062"/>
    <lineage>
        <taxon>Bacteria</taxon>
        <taxon>Bacillati</taxon>
        <taxon>Bacillota</taxon>
        <taxon>Bacilli</taxon>
        <taxon>Bacillales</taxon>
        <taxon>Staphylococcaceae</taxon>
        <taxon>Staphylococcus</taxon>
    </lineage>
</organism>
<protein>
    <recommendedName>
        <fullName>Acylphosphatase</fullName>
        <ecNumber>3.6.1.7</ecNumber>
    </recommendedName>
    <alternativeName>
        <fullName>Acylphosphate phosphohydrolase</fullName>
    </alternativeName>
</protein>